<sequence>MDDHKTASPPRERSYETPPAERPITDAEAARAAALSANEHIKIASGYLRGTLADGLLKHATGAISDDDGQLVKFHGMYLQDDRDLRAERTKKKLEKAYSFMIRLRIAGGVVSPKQWLALDEIARTYANGTLRATTRQTFQYHGVIKSNLKRTMQAIDAVLLDTIAACGDVNRNVMAATNPAQTGAHKAAYQLAKTISDTLLPKTNAWREIWLDGERVVGGEDEAVEPIYGKTYLPRKFKIVVAVPPSNEVDIFAHDLGFIAILDKKNKLKGWNVTVGGGMGMTHGETDTFPRTADVMAFCEPEDALKVAEAVMTVQRDWGNRKSRKNARLKYTIERYGLAAFRAEVERRVGRKLQDPKPFRFESNGDRYGWVEGEDGRHHLTLYLPSGRIKDVEGGPRYLSGLRRIAEVHQGDFRLTGNQNVIVANVPADRKSEIDALVAEYGLNLGVTALRRNSLACVALPTCGLALAESERFMPGLLTELEESLAAHGLQDEDITIRMTGCPNGCARPYIAEIGFVGRGPERYNLYLGAAFDGSRLSKLYAEDVAAKDIRATLDPLFAAYARDRQPGERFGDFVIRAGFVAKTINGPDFHDRTGALKAVA</sequence>
<name>CYSI_METNO</name>
<proteinExistence type="inferred from homology"/>
<gene>
    <name evidence="1" type="primary">cysI</name>
    <name type="ordered locus">Mnod_1804</name>
</gene>
<dbReference type="EC" id="1.8.1.2" evidence="1"/>
<dbReference type="EMBL" id="CP001349">
    <property type="protein sequence ID" value="ACL56794.1"/>
    <property type="molecule type" value="Genomic_DNA"/>
</dbReference>
<dbReference type="RefSeq" id="WP_015928486.1">
    <property type="nucleotide sequence ID" value="NC_011894.1"/>
</dbReference>
<dbReference type="SMR" id="B8IRY2"/>
<dbReference type="STRING" id="460265.Mnod_1804"/>
<dbReference type="KEGG" id="mno:Mnod_1804"/>
<dbReference type="eggNOG" id="COG0155">
    <property type="taxonomic scope" value="Bacteria"/>
</dbReference>
<dbReference type="HOGENOM" id="CLU_001975_3_2_5"/>
<dbReference type="OrthoDB" id="9803707at2"/>
<dbReference type="UniPathway" id="UPA00140">
    <property type="reaction ID" value="UER00207"/>
</dbReference>
<dbReference type="Proteomes" id="UP000008207">
    <property type="component" value="Chromosome"/>
</dbReference>
<dbReference type="GO" id="GO:0009337">
    <property type="term" value="C:sulfite reductase complex (NADPH)"/>
    <property type="evidence" value="ECO:0007669"/>
    <property type="project" value="InterPro"/>
</dbReference>
<dbReference type="GO" id="GO:0051539">
    <property type="term" value="F:4 iron, 4 sulfur cluster binding"/>
    <property type="evidence" value="ECO:0007669"/>
    <property type="project" value="UniProtKB-KW"/>
</dbReference>
<dbReference type="GO" id="GO:0020037">
    <property type="term" value="F:heme binding"/>
    <property type="evidence" value="ECO:0007669"/>
    <property type="project" value="InterPro"/>
</dbReference>
<dbReference type="GO" id="GO:0046872">
    <property type="term" value="F:metal ion binding"/>
    <property type="evidence" value="ECO:0007669"/>
    <property type="project" value="UniProtKB-KW"/>
</dbReference>
<dbReference type="GO" id="GO:0050661">
    <property type="term" value="F:NADP binding"/>
    <property type="evidence" value="ECO:0007669"/>
    <property type="project" value="InterPro"/>
</dbReference>
<dbReference type="GO" id="GO:0050311">
    <property type="term" value="F:sulfite reductase (ferredoxin) activity"/>
    <property type="evidence" value="ECO:0007669"/>
    <property type="project" value="TreeGrafter"/>
</dbReference>
<dbReference type="GO" id="GO:0004783">
    <property type="term" value="F:sulfite reductase (NADPH) activity"/>
    <property type="evidence" value="ECO:0007669"/>
    <property type="project" value="UniProtKB-UniRule"/>
</dbReference>
<dbReference type="GO" id="GO:0019344">
    <property type="term" value="P:cysteine biosynthetic process"/>
    <property type="evidence" value="ECO:0007669"/>
    <property type="project" value="UniProtKB-KW"/>
</dbReference>
<dbReference type="GO" id="GO:0070814">
    <property type="term" value="P:hydrogen sulfide biosynthetic process"/>
    <property type="evidence" value="ECO:0007669"/>
    <property type="project" value="UniProtKB-UniRule"/>
</dbReference>
<dbReference type="GO" id="GO:0000103">
    <property type="term" value="P:sulfate assimilation"/>
    <property type="evidence" value="ECO:0007669"/>
    <property type="project" value="UniProtKB-UniRule"/>
</dbReference>
<dbReference type="FunFam" id="3.30.413.10:FF:000003">
    <property type="entry name" value="Sulfite reductase [NADPH] hemoprotein beta-component"/>
    <property type="match status" value="1"/>
</dbReference>
<dbReference type="FunFam" id="3.30.413.10:FF:000004">
    <property type="entry name" value="Sulfite reductase [NADPH] hemoprotein beta-component"/>
    <property type="match status" value="1"/>
</dbReference>
<dbReference type="Gene3D" id="3.30.413.10">
    <property type="entry name" value="Sulfite Reductase Hemoprotein, domain 1"/>
    <property type="match status" value="2"/>
</dbReference>
<dbReference type="HAMAP" id="MF_01540">
    <property type="entry name" value="CysI"/>
    <property type="match status" value="1"/>
</dbReference>
<dbReference type="InterPro" id="IPR011786">
    <property type="entry name" value="CysI"/>
</dbReference>
<dbReference type="InterPro" id="IPR005117">
    <property type="entry name" value="NiRdtase/SiRdtase_haem-b_fer"/>
</dbReference>
<dbReference type="InterPro" id="IPR036136">
    <property type="entry name" value="Nit/Sulf_reduc_fer-like_dom_sf"/>
</dbReference>
<dbReference type="InterPro" id="IPR006067">
    <property type="entry name" value="NO2/SO3_Rdtase_4Fe4S_dom"/>
</dbReference>
<dbReference type="InterPro" id="IPR045169">
    <property type="entry name" value="NO2/SO3_Rdtase_4Fe4S_prot"/>
</dbReference>
<dbReference type="InterPro" id="IPR045854">
    <property type="entry name" value="NO2/SO3_Rdtase_4Fe4S_sf"/>
</dbReference>
<dbReference type="InterPro" id="IPR006066">
    <property type="entry name" value="NO2/SO3_Rdtase_FeS/sirohaem_BS"/>
</dbReference>
<dbReference type="NCBIfam" id="TIGR02041">
    <property type="entry name" value="CysI"/>
    <property type="match status" value="1"/>
</dbReference>
<dbReference type="NCBIfam" id="NF010029">
    <property type="entry name" value="PRK13504.1"/>
    <property type="match status" value="1"/>
</dbReference>
<dbReference type="PANTHER" id="PTHR11493:SF47">
    <property type="entry name" value="SULFITE REDUCTASE [NADPH] SUBUNIT BETA"/>
    <property type="match status" value="1"/>
</dbReference>
<dbReference type="PANTHER" id="PTHR11493">
    <property type="entry name" value="SULFITE REDUCTASE [NADPH] SUBUNIT BETA-RELATED"/>
    <property type="match status" value="1"/>
</dbReference>
<dbReference type="Pfam" id="PF01077">
    <property type="entry name" value="NIR_SIR"/>
    <property type="match status" value="1"/>
</dbReference>
<dbReference type="Pfam" id="PF03460">
    <property type="entry name" value="NIR_SIR_ferr"/>
    <property type="match status" value="2"/>
</dbReference>
<dbReference type="PRINTS" id="PR00397">
    <property type="entry name" value="SIROHAEM"/>
</dbReference>
<dbReference type="SUPFAM" id="SSF56014">
    <property type="entry name" value="Nitrite and sulphite reductase 4Fe-4S domain-like"/>
    <property type="match status" value="2"/>
</dbReference>
<dbReference type="SUPFAM" id="SSF55124">
    <property type="entry name" value="Nitrite/Sulfite reductase N-terminal domain-like"/>
    <property type="match status" value="2"/>
</dbReference>
<dbReference type="PROSITE" id="PS00365">
    <property type="entry name" value="NIR_SIR"/>
    <property type="match status" value="1"/>
</dbReference>
<accession>B8IRY2</accession>
<comment type="function">
    <text evidence="1">Component of the sulfite reductase complex that catalyzes the 6-electron reduction of sulfite to sulfide. This is one of several activities required for the biosynthesis of L-cysteine from sulfate.</text>
</comment>
<comment type="catalytic activity">
    <reaction evidence="1">
        <text>hydrogen sulfide + 3 NADP(+) + 3 H2O = sulfite + 3 NADPH + 4 H(+)</text>
        <dbReference type="Rhea" id="RHEA:13801"/>
        <dbReference type="ChEBI" id="CHEBI:15377"/>
        <dbReference type="ChEBI" id="CHEBI:15378"/>
        <dbReference type="ChEBI" id="CHEBI:17359"/>
        <dbReference type="ChEBI" id="CHEBI:29919"/>
        <dbReference type="ChEBI" id="CHEBI:57783"/>
        <dbReference type="ChEBI" id="CHEBI:58349"/>
        <dbReference type="EC" id="1.8.1.2"/>
    </reaction>
</comment>
<comment type="cofactor">
    <cofactor evidence="1">
        <name>siroheme</name>
        <dbReference type="ChEBI" id="CHEBI:60052"/>
    </cofactor>
    <text evidence="1">Binds 1 siroheme per subunit.</text>
</comment>
<comment type="cofactor">
    <cofactor evidence="1">
        <name>[4Fe-4S] cluster</name>
        <dbReference type="ChEBI" id="CHEBI:49883"/>
    </cofactor>
    <text evidence="1">Binds 1 [4Fe-4S] cluster per subunit.</text>
</comment>
<comment type="pathway">
    <text evidence="1">Sulfur metabolism; hydrogen sulfide biosynthesis; hydrogen sulfide from sulfite (NADPH route): step 1/1.</text>
</comment>
<comment type="subunit">
    <text evidence="1">Alpha(8)-beta(8). The alpha component is a flavoprotein, the beta component is a hemoprotein.</text>
</comment>
<comment type="similarity">
    <text evidence="1">Belongs to the nitrite and sulfite reductase 4Fe-4S domain family.</text>
</comment>
<evidence type="ECO:0000255" key="1">
    <source>
        <dbReference type="HAMAP-Rule" id="MF_01540"/>
    </source>
</evidence>
<evidence type="ECO:0000256" key="2">
    <source>
        <dbReference type="SAM" id="MobiDB-lite"/>
    </source>
</evidence>
<organism>
    <name type="scientific">Methylobacterium nodulans (strain LMG 21967 / CNCM I-2342 / ORS 2060)</name>
    <dbReference type="NCBI Taxonomy" id="460265"/>
    <lineage>
        <taxon>Bacteria</taxon>
        <taxon>Pseudomonadati</taxon>
        <taxon>Pseudomonadota</taxon>
        <taxon>Alphaproteobacteria</taxon>
        <taxon>Hyphomicrobiales</taxon>
        <taxon>Methylobacteriaceae</taxon>
        <taxon>Methylobacterium</taxon>
    </lineage>
</organism>
<reference key="1">
    <citation type="submission" date="2009-01" db="EMBL/GenBank/DDBJ databases">
        <title>Complete sequence of chromosome of Methylobacterium nodulans ORS 2060.</title>
        <authorList>
            <consortium name="US DOE Joint Genome Institute"/>
            <person name="Lucas S."/>
            <person name="Copeland A."/>
            <person name="Lapidus A."/>
            <person name="Glavina del Rio T."/>
            <person name="Dalin E."/>
            <person name="Tice H."/>
            <person name="Bruce D."/>
            <person name="Goodwin L."/>
            <person name="Pitluck S."/>
            <person name="Sims D."/>
            <person name="Brettin T."/>
            <person name="Detter J.C."/>
            <person name="Han C."/>
            <person name="Larimer F."/>
            <person name="Land M."/>
            <person name="Hauser L."/>
            <person name="Kyrpides N."/>
            <person name="Ivanova N."/>
            <person name="Marx C.J."/>
            <person name="Richardson P."/>
        </authorList>
    </citation>
    <scope>NUCLEOTIDE SEQUENCE [LARGE SCALE GENOMIC DNA]</scope>
    <source>
        <strain>LMG 21967 / CNCM I-2342 / ORS 2060</strain>
    </source>
</reference>
<feature type="chain" id="PRO_0000388496" description="Sulfite reductase [NADPH] hemoprotein beta-component">
    <location>
        <begin position="1"/>
        <end position="602"/>
    </location>
</feature>
<feature type="region of interest" description="Disordered" evidence="2">
    <location>
        <begin position="1"/>
        <end position="24"/>
    </location>
</feature>
<feature type="compositionally biased region" description="Basic and acidic residues" evidence="2">
    <location>
        <begin position="1"/>
        <end position="15"/>
    </location>
</feature>
<feature type="binding site" evidence="1">
    <location>
        <position position="458"/>
    </location>
    <ligand>
        <name>[4Fe-4S] cluster</name>
        <dbReference type="ChEBI" id="CHEBI:49883"/>
    </ligand>
</feature>
<feature type="binding site" evidence="1">
    <location>
        <position position="464"/>
    </location>
    <ligand>
        <name>[4Fe-4S] cluster</name>
        <dbReference type="ChEBI" id="CHEBI:49883"/>
    </ligand>
</feature>
<feature type="binding site" evidence="1">
    <location>
        <position position="503"/>
    </location>
    <ligand>
        <name>[4Fe-4S] cluster</name>
        <dbReference type="ChEBI" id="CHEBI:49883"/>
    </ligand>
</feature>
<feature type="binding site" evidence="1">
    <location>
        <position position="507"/>
    </location>
    <ligand>
        <name>[4Fe-4S] cluster</name>
        <dbReference type="ChEBI" id="CHEBI:49883"/>
    </ligand>
</feature>
<feature type="binding site" description="axial binding residue" evidence="1">
    <location>
        <position position="507"/>
    </location>
    <ligand>
        <name>siroheme</name>
        <dbReference type="ChEBI" id="CHEBI:60052"/>
    </ligand>
    <ligandPart>
        <name>Fe</name>
        <dbReference type="ChEBI" id="CHEBI:18248"/>
    </ligandPart>
</feature>
<protein>
    <recommendedName>
        <fullName evidence="1">Sulfite reductase [NADPH] hemoprotein beta-component</fullName>
        <shortName evidence="1">SiR-HP</shortName>
        <shortName evidence="1">SiRHP</shortName>
        <ecNumber evidence="1">1.8.1.2</ecNumber>
    </recommendedName>
</protein>
<keyword id="KW-0004">4Fe-4S</keyword>
<keyword id="KW-0028">Amino-acid biosynthesis</keyword>
<keyword id="KW-0198">Cysteine biosynthesis</keyword>
<keyword id="KW-0349">Heme</keyword>
<keyword id="KW-0408">Iron</keyword>
<keyword id="KW-0411">Iron-sulfur</keyword>
<keyword id="KW-0479">Metal-binding</keyword>
<keyword id="KW-0521">NADP</keyword>
<keyword id="KW-0560">Oxidoreductase</keyword>
<keyword id="KW-1185">Reference proteome</keyword>